<accession>Q47LA7</accession>
<sequence>MSTTPARLGTRRSTMATNQSRRVAEILTARTGVPVELVLITSFGDITRAHLTQLGGTGVFVSALRDALLAGEVEFAVHSLKDLPTAPTEGIVLAAVTERDDPRDALCARDGLKFADLPPGATVGTGSPRRVAQLAALRPDLRYVPIRGNAETRLGKVASGELDAVVLAYAGLHRVGRLDDVTDVFDVDQVLPAPGQGALAVECRTADFTGPLRYLTAVDHLPTRAAVTAERVILAELEAGCAAPVGAYAEFVAEDRLRLRAAVVATDGSQAVRAEQTVTVTEFPDAVQAATALGRQLAHDMIEQGADQIVADAAAGRGES</sequence>
<proteinExistence type="inferred from homology"/>
<keyword id="KW-0627">Porphyrin biosynthesis</keyword>
<keyword id="KW-0808">Transferase</keyword>
<name>HEM3_THEFY</name>
<organism>
    <name type="scientific">Thermobifida fusca (strain YX)</name>
    <dbReference type="NCBI Taxonomy" id="269800"/>
    <lineage>
        <taxon>Bacteria</taxon>
        <taxon>Bacillati</taxon>
        <taxon>Actinomycetota</taxon>
        <taxon>Actinomycetes</taxon>
        <taxon>Streptosporangiales</taxon>
        <taxon>Nocardiopsidaceae</taxon>
        <taxon>Thermobifida</taxon>
    </lineage>
</organism>
<comment type="function">
    <text evidence="1">Tetrapolymerization of the monopyrrole PBG into the hydroxymethylbilane pre-uroporphyrinogen in several discrete steps.</text>
</comment>
<comment type="catalytic activity">
    <reaction evidence="1">
        <text>4 porphobilinogen + H2O = hydroxymethylbilane + 4 NH4(+)</text>
        <dbReference type="Rhea" id="RHEA:13185"/>
        <dbReference type="ChEBI" id="CHEBI:15377"/>
        <dbReference type="ChEBI" id="CHEBI:28938"/>
        <dbReference type="ChEBI" id="CHEBI:57845"/>
        <dbReference type="ChEBI" id="CHEBI:58126"/>
        <dbReference type="EC" id="2.5.1.61"/>
    </reaction>
</comment>
<comment type="cofactor">
    <cofactor evidence="1">
        <name>dipyrromethane</name>
        <dbReference type="ChEBI" id="CHEBI:60342"/>
    </cofactor>
    <text evidence="1">Binds 1 dipyrromethane group covalently.</text>
</comment>
<comment type="pathway">
    <text evidence="1">Porphyrin-containing compound metabolism; protoporphyrin-IX biosynthesis; coproporphyrinogen-III from 5-aminolevulinate: step 2/4.</text>
</comment>
<comment type="subunit">
    <text evidence="1">Monomer.</text>
</comment>
<comment type="miscellaneous">
    <text evidence="1">The porphobilinogen subunits are added to the dipyrromethane group.</text>
</comment>
<comment type="similarity">
    <text evidence="1">Belongs to the HMBS family.</text>
</comment>
<protein>
    <recommendedName>
        <fullName evidence="1">Porphobilinogen deaminase</fullName>
        <shortName evidence="1">PBG</shortName>
        <ecNumber evidence="1">2.5.1.61</ecNumber>
    </recommendedName>
    <alternativeName>
        <fullName evidence="1">Hydroxymethylbilane synthase</fullName>
        <shortName evidence="1">HMBS</shortName>
    </alternativeName>
    <alternativeName>
        <fullName evidence="1">Pre-uroporphyrinogen synthase</fullName>
    </alternativeName>
</protein>
<gene>
    <name evidence="1" type="primary">hemC</name>
    <name type="ordered locus">Tfu_2732</name>
</gene>
<reference key="1">
    <citation type="journal article" date="2007" name="J. Bacteriol.">
        <title>Genome sequence and analysis of the soil cellulolytic actinomycete Thermobifida fusca YX.</title>
        <authorList>
            <person name="Lykidis A."/>
            <person name="Mavromatis K."/>
            <person name="Ivanova N."/>
            <person name="Anderson I."/>
            <person name="Land M."/>
            <person name="DiBartolo G."/>
            <person name="Martinez M."/>
            <person name="Lapidus A."/>
            <person name="Lucas S."/>
            <person name="Copeland A."/>
            <person name="Richardson P."/>
            <person name="Wilson D.B."/>
            <person name="Kyrpides N."/>
        </authorList>
    </citation>
    <scope>NUCLEOTIDE SEQUENCE [LARGE SCALE GENOMIC DNA]</scope>
    <source>
        <strain>YX</strain>
    </source>
</reference>
<evidence type="ECO:0000255" key="1">
    <source>
        <dbReference type="HAMAP-Rule" id="MF_00260"/>
    </source>
</evidence>
<dbReference type="EC" id="2.5.1.61" evidence="1"/>
<dbReference type="EMBL" id="CP000088">
    <property type="protein sequence ID" value="AAZ56765.1"/>
    <property type="molecule type" value="Genomic_DNA"/>
</dbReference>
<dbReference type="RefSeq" id="WP_011293155.1">
    <property type="nucleotide sequence ID" value="NC_007333.1"/>
</dbReference>
<dbReference type="SMR" id="Q47LA7"/>
<dbReference type="STRING" id="269800.Tfu_2732"/>
<dbReference type="KEGG" id="tfu:Tfu_2732"/>
<dbReference type="eggNOG" id="COG0181">
    <property type="taxonomic scope" value="Bacteria"/>
</dbReference>
<dbReference type="HOGENOM" id="CLU_019704_1_0_11"/>
<dbReference type="OrthoDB" id="9810298at2"/>
<dbReference type="UniPathway" id="UPA00251">
    <property type="reaction ID" value="UER00319"/>
</dbReference>
<dbReference type="GO" id="GO:0005737">
    <property type="term" value="C:cytoplasm"/>
    <property type="evidence" value="ECO:0007669"/>
    <property type="project" value="TreeGrafter"/>
</dbReference>
<dbReference type="GO" id="GO:0004418">
    <property type="term" value="F:hydroxymethylbilane synthase activity"/>
    <property type="evidence" value="ECO:0007669"/>
    <property type="project" value="UniProtKB-UniRule"/>
</dbReference>
<dbReference type="GO" id="GO:0006782">
    <property type="term" value="P:protoporphyrinogen IX biosynthetic process"/>
    <property type="evidence" value="ECO:0007669"/>
    <property type="project" value="UniProtKB-UniRule"/>
</dbReference>
<dbReference type="FunFam" id="3.40.190.10:FF:000005">
    <property type="entry name" value="Porphobilinogen deaminase"/>
    <property type="match status" value="1"/>
</dbReference>
<dbReference type="Gene3D" id="3.40.190.10">
    <property type="entry name" value="Periplasmic binding protein-like II"/>
    <property type="match status" value="2"/>
</dbReference>
<dbReference type="Gene3D" id="3.30.160.40">
    <property type="entry name" value="Porphobilinogen deaminase, C-terminal domain"/>
    <property type="match status" value="1"/>
</dbReference>
<dbReference type="HAMAP" id="MF_00260">
    <property type="entry name" value="Porphobil_deam"/>
    <property type="match status" value="1"/>
</dbReference>
<dbReference type="InterPro" id="IPR000860">
    <property type="entry name" value="HemC"/>
</dbReference>
<dbReference type="InterPro" id="IPR022419">
    <property type="entry name" value="Porphobilin_deaminase_cofac_BS"/>
</dbReference>
<dbReference type="InterPro" id="IPR022417">
    <property type="entry name" value="Porphobilin_deaminase_N"/>
</dbReference>
<dbReference type="InterPro" id="IPR022418">
    <property type="entry name" value="Porphobilinogen_deaminase_C"/>
</dbReference>
<dbReference type="InterPro" id="IPR036803">
    <property type="entry name" value="Porphobilinogen_deaminase_C_sf"/>
</dbReference>
<dbReference type="NCBIfam" id="TIGR00212">
    <property type="entry name" value="hemC"/>
    <property type="match status" value="1"/>
</dbReference>
<dbReference type="PANTHER" id="PTHR11557">
    <property type="entry name" value="PORPHOBILINOGEN DEAMINASE"/>
    <property type="match status" value="1"/>
</dbReference>
<dbReference type="PANTHER" id="PTHR11557:SF0">
    <property type="entry name" value="PORPHOBILINOGEN DEAMINASE"/>
    <property type="match status" value="1"/>
</dbReference>
<dbReference type="Pfam" id="PF01379">
    <property type="entry name" value="Porphobil_deam"/>
    <property type="match status" value="1"/>
</dbReference>
<dbReference type="Pfam" id="PF03900">
    <property type="entry name" value="Porphobil_deamC"/>
    <property type="match status" value="1"/>
</dbReference>
<dbReference type="PIRSF" id="PIRSF001438">
    <property type="entry name" value="4pyrrol_synth_OHMeBilane_synth"/>
    <property type="match status" value="1"/>
</dbReference>
<dbReference type="PRINTS" id="PR00151">
    <property type="entry name" value="PORPHBDMNASE"/>
</dbReference>
<dbReference type="SUPFAM" id="SSF53850">
    <property type="entry name" value="Periplasmic binding protein-like II"/>
    <property type="match status" value="1"/>
</dbReference>
<dbReference type="SUPFAM" id="SSF54782">
    <property type="entry name" value="Porphobilinogen deaminase (hydroxymethylbilane synthase), C-terminal domain"/>
    <property type="match status" value="1"/>
</dbReference>
<dbReference type="PROSITE" id="PS00533">
    <property type="entry name" value="PORPHOBILINOGEN_DEAM"/>
    <property type="match status" value="1"/>
</dbReference>
<feature type="chain" id="PRO_0000304286" description="Porphobilinogen deaminase">
    <location>
        <begin position="1"/>
        <end position="320"/>
    </location>
</feature>
<feature type="modified residue" description="S-(dipyrrolylmethanemethyl)cysteine" evidence="1">
    <location>
        <position position="241"/>
    </location>
</feature>